<accession>P0ACF2</accession>
<accession>P02342</accession>
<gene>
    <name type="primary">hupA</name>
    <name type="ordered locus">Z5576</name>
    <name type="ordered locus">ECs4923</name>
</gene>
<reference key="1">
    <citation type="journal article" date="2001" name="Nature">
        <title>Genome sequence of enterohaemorrhagic Escherichia coli O157:H7.</title>
        <authorList>
            <person name="Perna N.T."/>
            <person name="Plunkett G. III"/>
            <person name="Burland V."/>
            <person name="Mau B."/>
            <person name="Glasner J.D."/>
            <person name="Rose D.J."/>
            <person name="Mayhew G.F."/>
            <person name="Evans P.S."/>
            <person name="Gregor J."/>
            <person name="Kirkpatrick H.A."/>
            <person name="Posfai G."/>
            <person name="Hackett J."/>
            <person name="Klink S."/>
            <person name="Boutin A."/>
            <person name="Shao Y."/>
            <person name="Miller L."/>
            <person name="Grotbeck E.J."/>
            <person name="Davis N.W."/>
            <person name="Lim A."/>
            <person name="Dimalanta E.T."/>
            <person name="Potamousis K."/>
            <person name="Apodaca J."/>
            <person name="Anantharaman T.S."/>
            <person name="Lin J."/>
            <person name="Yen G."/>
            <person name="Schwartz D.C."/>
            <person name="Welch R.A."/>
            <person name="Blattner F.R."/>
        </authorList>
    </citation>
    <scope>NUCLEOTIDE SEQUENCE [LARGE SCALE GENOMIC DNA]</scope>
    <source>
        <strain>O157:H7 / EDL933 / ATCC 700927 / EHEC</strain>
    </source>
</reference>
<reference key="2">
    <citation type="journal article" date="2001" name="DNA Res.">
        <title>Complete genome sequence of enterohemorrhagic Escherichia coli O157:H7 and genomic comparison with a laboratory strain K-12.</title>
        <authorList>
            <person name="Hayashi T."/>
            <person name="Makino K."/>
            <person name="Ohnishi M."/>
            <person name="Kurokawa K."/>
            <person name="Ishii K."/>
            <person name="Yokoyama K."/>
            <person name="Han C.-G."/>
            <person name="Ohtsubo E."/>
            <person name="Nakayama K."/>
            <person name="Murata T."/>
            <person name="Tanaka M."/>
            <person name="Tobe T."/>
            <person name="Iida T."/>
            <person name="Takami H."/>
            <person name="Honda T."/>
            <person name="Sasakawa C."/>
            <person name="Ogasawara N."/>
            <person name="Yasunaga T."/>
            <person name="Kuhara S."/>
            <person name="Shiba T."/>
            <person name="Hattori M."/>
            <person name="Shinagawa H."/>
        </authorList>
    </citation>
    <scope>NUCLEOTIDE SEQUENCE [LARGE SCALE GENOMIC DNA]</scope>
    <source>
        <strain>O157:H7 / Sakai / RIMD 0509952 / EHEC</strain>
    </source>
</reference>
<proteinExistence type="inferred from homology"/>
<sequence length="90" mass="9535">MNKTQLIDVIAEKAELSKTQAKAALESTLAAITESLKEGDAVQLVGFGTFKVNHRAERTGRNPQTGKEIKIAAANVPAFVSGKALKDAVK</sequence>
<evidence type="ECO:0000250" key="1"/>
<evidence type="ECO:0000305" key="2"/>
<keyword id="KW-0226">DNA condensation</keyword>
<keyword id="KW-0238">DNA-binding</keyword>
<keyword id="KW-1185">Reference proteome</keyword>
<name>DBHA_ECO57</name>
<protein>
    <recommendedName>
        <fullName>DNA-binding protein HU-alpha</fullName>
    </recommendedName>
    <alternativeName>
        <fullName>HU-2</fullName>
    </alternativeName>
    <alternativeName>
        <fullName>NS2</fullName>
    </alternativeName>
</protein>
<comment type="function">
    <text evidence="1">Histone-like DNA-binding protein which is capable of wrapping DNA to stabilize it, and thus to prevent its denaturation under extreme environmental conditions.</text>
</comment>
<comment type="subunit">
    <text evidence="1">Heterodimer of an alpha and a beta chain.</text>
</comment>
<comment type="similarity">
    <text evidence="2">Belongs to the bacterial histone-like protein family.</text>
</comment>
<feature type="chain" id="PRO_0000104936" description="DNA-binding protein HU-alpha">
    <location>
        <begin position="1"/>
        <end position="90"/>
    </location>
</feature>
<organism>
    <name type="scientific">Escherichia coli O157:H7</name>
    <dbReference type="NCBI Taxonomy" id="83334"/>
    <lineage>
        <taxon>Bacteria</taxon>
        <taxon>Pseudomonadati</taxon>
        <taxon>Pseudomonadota</taxon>
        <taxon>Gammaproteobacteria</taxon>
        <taxon>Enterobacterales</taxon>
        <taxon>Enterobacteriaceae</taxon>
        <taxon>Escherichia</taxon>
    </lineage>
</organism>
<dbReference type="EMBL" id="AE005174">
    <property type="protein sequence ID" value="AAG59197.1"/>
    <property type="molecule type" value="Genomic_DNA"/>
</dbReference>
<dbReference type="EMBL" id="BA000007">
    <property type="protein sequence ID" value="BAB38346.1"/>
    <property type="molecule type" value="Genomic_DNA"/>
</dbReference>
<dbReference type="PIR" id="A86092">
    <property type="entry name" value="A86092"/>
</dbReference>
<dbReference type="PIR" id="C91244">
    <property type="entry name" value="C91244"/>
</dbReference>
<dbReference type="RefSeq" id="NP_312950.1">
    <property type="nucleotide sequence ID" value="NC_002695.1"/>
</dbReference>
<dbReference type="RefSeq" id="WP_001044513.1">
    <property type="nucleotide sequence ID" value="NZ_VOAI01000037.1"/>
</dbReference>
<dbReference type="SMR" id="P0ACF2"/>
<dbReference type="STRING" id="155864.Z5576"/>
<dbReference type="GeneID" id="914933"/>
<dbReference type="GeneID" id="93777894"/>
<dbReference type="KEGG" id="ece:Z5576"/>
<dbReference type="KEGG" id="ecs:ECs_4923"/>
<dbReference type="PATRIC" id="fig|386585.9.peg.5148"/>
<dbReference type="eggNOG" id="COG0776">
    <property type="taxonomic scope" value="Bacteria"/>
</dbReference>
<dbReference type="HOGENOM" id="CLU_105066_3_1_6"/>
<dbReference type="OMA" id="ISQEKQC"/>
<dbReference type="Proteomes" id="UP000000558">
    <property type="component" value="Chromosome"/>
</dbReference>
<dbReference type="Proteomes" id="UP000002519">
    <property type="component" value="Chromosome"/>
</dbReference>
<dbReference type="GO" id="GO:0005829">
    <property type="term" value="C:cytosol"/>
    <property type="evidence" value="ECO:0007669"/>
    <property type="project" value="TreeGrafter"/>
</dbReference>
<dbReference type="GO" id="GO:0003677">
    <property type="term" value="F:DNA binding"/>
    <property type="evidence" value="ECO:0007669"/>
    <property type="project" value="UniProtKB-KW"/>
</dbReference>
<dbReference type="GO" id="GO:0030527">
    <property type="term" value="F:structural constituent of chromatin"/>
    <property type="evidence" value="ECO:0007669"/>
    <property type="project" value="InterPro"/>
</dbReference>
<dbReference type="GO" id="GO:0030261">
    <property type="term" value="P:chromosome condensation"/>
    <property type="evidence" value="ECO:0007669"/>
    <property type="project" value="UniProtKB-KW"/>
</dbReference>
<dbReference type="CDD" id="cd13831">
    <property type="entry name" value="HU"/>
    <property type="match status" value="1"/>
</dbReference>
<dbReference type="FunFam" id="4.10.520.10:FF:000001">
    <property type="entry name" value="DNA-binding protein HU"/>
    <property type="match status" value="1"/>
</dbReference>
<dbReference type="Gene3D" id="4.10.520.10">
    <property type="entry name" value="IHF-like DNA-binding proteins"/>
    <property type="match status" value="1"/>
</dbReference>
<dbReference type="InterPro" id="IPR000119">
    <property type="entry name" value="Hist_DNA-bd"/>
</dbReference>
<dbReference type="InterPro" id="IPR020816">
    <property type="entry name" value="Histone-like_DNA-bd_CS"/>
</dbReference>
<dbReference type="InterPro" id="IPR010992">
    <property type="entry name" value="IHF-like_DNA-bd_dom_sf"/>
</dbReference>
<dbReference type="NCBIfam" id="NF008023">
    <property type="entry name" value="PRK10753.1"/>
    <property type="match status" value="1"/>
</dbReference>
<dbReference type="PANTHER" id="PTHR33175">
    <property type="entry name" value="DNA-BINDING PROTEIN HU"/>
    <property type="match status" value="1"/>
</dbReference>
<dbReference type="PANTHER" id="PTHR33175:SF12">
    <property type="entry name" value="DNA-BINDING PROTEIN HU-ALPHA"/>
    <property type="match status" value="1"/>
</dbReference>
<dbReference type="Pfam" id="PF00216">
    <property type="entry name" value="Bac_DNA_binding"/>
    <property type="match status" value="1"/>
</dbReference>
<dbReference type="PRINTS" id="PR01727">
    <property type="entry name" value="DNABINDINGHU"/>
</dbReference>
<dbReference type="SMART" id="SM00411">
    <property type="entry name" value="BHL"/>
    <property type="match status" value="1"/>
</dbReference>
<dbReference type="SUPFAM" id="SSF47729">
    <property type="entry name" value="IHF-like DNA-binding proteins"/>
    <property type="match status" value="1"/>
</dbReference>
<dbReference type="PROSITE" id="PS00045">
    <property type="entry name" value="HISTONE_LIKE"/>
    <property type="match status" value="1"/>
</dbReference>